<name>ISPF_CLOBK</name>
<comment type="function">
    <text evidence="1">Involved in the biosynthesis of isopentenyl diphosphate (IPP) and dimethylallyl diphosphate (DMAPP), two major building blocks of isoprenoid compounds. Catalyzes the conversion of 4-diphosphocytidyl-2-C-methyl-D-erythritol 2-phosphate (CDP-ME2P) to 2-C-methyl-D-erythritol 2,4-cyclodiphosphate (ME-CPP) with a corresponding release of cytidine 5-monophosphate (CMP).</text>
</comment>
<comment type="catalytic activity">
    <reaction evidence="1">
        <text>4-CDP-2-C-methyl-D-erythritol 2-phosphate = 2-C-methyl-D-erythritol 2,4-cyclic diphosphate + CMP</text>
        <dbReference type="Rhea" id="RHEA:23864"/>
        <dbReference type="ChEBI" id="CHEBI:57919"/>
        <dbReference type="ChEBI" id="CHEBI:58483"/>
        <dbReference type="ChEBI" id="CHEBI:60377"/>
        <dbReference type="EC" id="4.6.1.12"/>
    </reaction>
</comment>
<comment type="cofactor">
    <cofactor evidence="1">
        <name>a divalent metal cation</name>
        <dbReference type="ChEBI" id="CHEBI:60240"/>
    </cofactor>
    <text evidence="1">Binds 1 divalent metal cation per subunit.</text>
</comment>
<comment type="pathway">
    <text evidence="1">Isoprenoid biosynthesis; isopentenyl diphosphate biosynthesis via DXP pathway; isopentenyl diphosphate from 1-deoxy-D-xylulose 5-phosphate: step 4/6.</text>
</comment>
<comment type="subunit">
    <text evidence="1">Homotrimer.</text>
</comment>
<comment type="similarity">
    <text evidence="1">Belongs to the IspF family.</text>
</comment>
<evidence type="ECO:0000255" key="1">
    <source>
        <dbReference type="HAMAP-Rule" id="MF_00107"/>
    </source>
</evidence>
<dbReference type="EC" id="4.6.1.12" evidence="1"/>
<dbReference type="EMBL" id="CP000939">
    <property type="protein sequence ID" value="ACA46777.1"/>
    <property type="molecule type" value="Genomic_DNA"/>
</dbReference>
<dbReference type="RefSeq" id="WP_003404877.1">
    <property type="nucleotide sequence ID" value="NC_010516.1"/>
</dbReference>
<dbReference type="SMR" id="B1ID41"/>
<dbReference type="KEGG" id="cbb:CLD_0719"/>
<dbReference type="HOGENOM" id="CLU_084630_2_0_9"/>
<dbReference type="UniPathway" id="UPA00056">
    <property type="reaction ID" value="UER00095"/>
</dbReference>
<dbReference type="Proteomes" id="UP000008541">
    <property type="component" value="Chromosome"/>
</dbReference>
<dbReference type="GO" id="GO:0008685">
    <property type="term" value="F:2-C-methyl-D-erythritol 2,4-cyclodiphosphate synthase activity"/>
    <property type="evidence" value="ECO:0007669"/>
    <property type="project" value="UniProtKB-UniRule"/>
</dbReference>
<dbReference type="GO" id="GO:0046872">
    <property type="term" value="F:metal ion binding"/>
    <property type="evidence" value="ECO:0007669"/>
    <property type="project" value="UniProtKB-KW"/>
</dbReference>
<dbReference type="GO" id="GO:0019288">
    <property type="term" value="P:isopentenyl diphosphate biosynthetic process, methylerythritol 4-phosphate pathway"/>
    <property type="evidence" value="ECO:0007669"/>
    <property type="project" value="UniProtKB-UniRule"/>
</dbReference>
<dbReference type="GO" id="GO:0016114">
    <property type="term" value="P:terpenoid biosynthetic process"/>
    <property type="evidence" value="ECO:0007669"/>
    <property type="project" value="InterPro"/>
</dbReference>
<dbReference type="CDD" id="cd00554">
    <property type="entry name" value="MECDP_synthase"/>
    <property type="match status" value="1"/>
</dbReference>
<dbReference type="FunFam" id="3.30.1330.50:FF:000001">
    <property type="entry name" value="2-C-methyl-D-erythritol 2,4-cyclodiphosphate synthase"/>
    <property type="match status" value="1"/>
</dbReference>
<dbReference type="Gene3D" id="3.30.1330.50">
    <property type="entry name" value="2-C-methyl-D-erythritol 2,4-cyclodiphosphate synthase"/>
    <property type="match status" value="1"/>
</dbReference>
<dbReference type="HAMAP" id="MF_00107">
    <property type="entry name" value="IspF"/>
    <property type="match status" value="1"/>
</dbReference>
<dbReference type="InterPro" id="IPR003526">
    <property type="entry name" value="MECDP_synthase"/>
</dbReference>
<dbReference type="InterPro" id="IPR020555">
    <property type="entry name" value="MECDP_synthase_CS"/>
</dbReference>
<dbReference type="InterPro" id="IPR036571">
    <property type="entry name" value="MECDP_synthase_sf"/>
</dbReference>
<dbReference type="NCBIfam" id="TIGR00151">
    <property type="entry name" value="ispF"/>
    <property type="match status" value="1"/>
</dbReference>
<dbReference type="PANTHER" id="PTHR43181">
    <property type="entry name" value="2-C-METHYL-D-ERYTHRITOL 2,4-CYCLODIPHOSPHATE SYNTHASE, CHLOROPLASTIC"/>
    <property type="match status" value="1"/>
</dbReference>
<dbReference type="PANTHER" id="PTHR43181:SF1">
    <property type="entry name" value="2-C-METHYL-D-ERYTHRITOL 2,4-CYCLODIPHOSPHATE SYNTHASE, CHLOROPLASTIC"/>
    <property type="match status" value="1"/>
</dbReference>
<dbReference type="Pfam" id="PF02542">
    <property type="entry name" value="YgbB"/>
    <property type="match status" value="1"/>
</dbReference>
<dbReference type="SUPFAM" id="SSF69765">
    <property type="entry name" value="IpsF-like"/>
    <property type="match status" value="1"/>
</dbReference>
<dbReference type="PROSITE" id="PS01350">
    <property type="entry name" value="ISPF"/>
    <property type="match status" value="1"/>
</dbReference>
<protein>
    <recommendedName>
        <fullName evidence="1">2-C-methyl-D-erythritol 2,4-cyclodiphosphate synthase</fullName>
        <shortName evidence="1">MECDP-synthase</shortName>
        <shortName evidence="1">MECPP-synthase</shortName>
        <shortName evidence="1">MECPS</shortName>
        <ecNumber evidence="1">4.6.1.12</ecNumber>
    </recommendedName>
</protein>
<proteinExistence type="inferred from homology"/>
<keyword id="KW-0414">Isoprene biosynthesis</keyword>
<keyword id="KW-0456">Lyase</keyword>
<keyword id="KW-0479">Metal-binding</keyword>
<reference key="1">
    <citation type="journal article" date="2007" name="PLoS ONE">
        <title>Analysis of the neurotoxin complex genes in Clostridium botulinum A1-A4 and B1 strains: BoNT/A3, /Ba4 and /B1 clusters are located within plasmids.</title>
        <authorList>
            <person name="Smith T.J."/>
            <person name="Hill K.K."/>
            <person name="Foley B.T."/>
            <person name="Detter J.C."/>
            <person name="Munk A.C."/>
            <person name="Bruce D.C."/>
            <person name="Doggett N.A."/>
            <person name="Smith L.A."/>
            <person name="Marks J.D."/>
            <person name="Xie G."/>
            <person name="Brettin T.S."/>
        </authorList>
    </citation>
    <scope>NUCLEOTIDE SEQUENCE [LARGE SCALE GENOMIC DNA]</scope>
    <source>
        <strain>Okra / Type B1</strain>
    </source>
</reference>
<organism>
    <name type="scientific">Clostridium botulinum (strain Okra / Type B1)</name>
    <dbReference type="NCBI Taxonomy" id="498213"/>
    <lineage>
        <taxon>Bacteria</taxon>
        <taxon>Bacillati</taxon>
        <taxon>Bacillota</taxon>
        <taxon>Clostridia</taxon>
        <taxon>Eubacteriales</taxon>
        <taxon>Clostridiaceae</taxon>
        <taxon>Clostridium</taxon>
    </lineage>
</organism>
<accession>B1ID41</accession>
<gene>
    <name evidence="1" type="primary">ispF</name>
    <name type="ordered locus">CLD_0719</name>
</gene>
<sequence>MRIGLGYDVHKLVENRPLIIGGVTIPHDKGLLGHSDADVLVHAIMDALLGAAALGDIGKHFPDSDKNFKNISSLLLLSKVKDLINKEGYKIVNIDCTIIAQKPKMLYHINAMKKNICKCLKLDNNMLNIKATTEEGLGFTGKEEGISANAICLLD</sequence>
<feature type="chain" id="PRO_1000094254" description="2-C-methyl-D-erythritol 2,4-cyclodiphosphate synthase">
    <location>
        <begin position="1"/>
        <end position="155"/>
    </location>
</feature>
<feature type="binding site" evidence="1">
    <location>
        <begin position="8"/>
        <end position="10"/>
    </location>
    <ligand>
        <name>4-CDP-2-C-methyl-D-erythritol 2-phosphate</name>
        <dbReference type="ChEBI" id="CHEBI:57919"/>
    </ligand>
</feature>
<feature type="binding site" evidence="1">
    <location>
        <position position="8"/>
    </location>
    <ligand>
        <name>a divalent metal cation</name>
        <dbReference type="ChEBI" id="CHEBI:60240"/>
    </ligand>
</feature>
<feature type="binding site" evidence="1">
    <location>
        <position position="10"/>
    </location>
    <ligand>
        <name>a divalent metal cation</name>
        <dbReference type="ChEBI" id="CHEBI:60240"/>
    </ligand>
</feature>
<feature type="binding site" evidence="1">
    <location>
        <begin position="34"/>
        <end position="35"/>
    </location>
    <ligand>
        <name>4-CDP-2-C-methyl-D-erythritol 2-phosphate</name>
        <dbReference type="ChEBI" id="CHEBI:57919"/>
    </ligand>
</feature>
<feature type="binding site" evidence="1">
    <location>
        <position position="42"/>
    </location>
    <ligand>
        <name>a divalent metal cation</name>
        <dbReference type="ChEBI" id="CHEBI:60240"/>
    </ligand>
</feature>
<feature type="binding site" evidence="1">
    <location>
        <begin position="56"/>
        <end position="58"/>
    </location>
    <ligand>
        <name>4-CDP-2-C-methyl-D-erythritol 2-phosphate</name>
        <dbReference type="ChEBI" id="CHEBI:57919"/>
    </ligand>
</feature>
<feature type="binding site" evidence="1">
    <location>
        <begin position="61"/>
        <end position="65"/>
    </location>
    <ligand>
        <name>4-CDP-2-C-methyl-D-erythritol 2-phosphate</name>
        <dbReference type="ChEBI" id="CHEBI:57919"/>
    </ligand>
</feature>
<feature type="binding site" evidence="1">
    <location>
        <begin position="100"/>
        <end position="106"/>
    </location>
    <ligand>
        <name>4-CDP-2-C-methyl-D-erythritol 2-phosphate</name>
        <dbReference type="ChEBI" id="CHEBI:57919"/>
    </ligand>
</feature>
<feature type="binding site" evidence="1">
    <location>
        <begin position="132"/>
        <end position="135"/>
    </location>
    <ligand>
        <name>4-CDP-2-C-methyl-D-erythritol 2-phosphate</name>
        <dbReference type="ChEBI" id="CHEBI:57919"/>
    </ligand>
</feature>
<feature type="binding site" evidence="1">
    <location>
        <position position="139"/>
    </location>
    <ligand>
        <name>4-CDP-2-C-methyl-D-erythritol 2-phosphate</name>
        <dbReference type="ChEBI" id="CHEBI:57919"/>
    </ligand>
</feature>
<feature type="binding site" evidence="1">
    <location>
        <position position="142"/>
    </location>
    <ligand>
        <name>4-CDP-2-C-methyl-D-erythritol 2-phosphate</name>
        <dbReference type="ChEBI" id="CHEBI:57919"/>
    </ligand>
</feature>
<feature type="site" description="Transition state stabilizer" evidence="1">
    <location>
        <position position="34"/>
    </location>
</feature>
<feature type="site" description="Transition state stabilizer" evidence="1">
    <location>
        <position position="133"/>
    </location>
</feature>